<dbReference type="EC" id="2.7.7.7" evidence="1"/>
<dbReference type="EMBL" id="AE008918">
    <property type="protein sequence ID" value="AAL53898.1"/>
    <property type="molecule type" value="Genomic_DNA"/>
</dbReference>
<dbReference type="PIR" id="AG3591">
    <property type="entry name" value="AG3591"/>
</dbReference>
<dbReference type="RefSeq" id="WP_002969333.1">
    <property type="nucleotide sequence ID" value="NZ_GG703779.1"/>
</dbReference>
<dbReference type="SMR" id="Q8YC76"/>
<dbReference type="KEGG" id="bme:BMEII0656"/>
<dbReference type="KEGG" id="bmel:DK63_2589"/>
<dbReference type="PATRIC" id="fig|224914.52.peg.2715"/>
<dbReference type="eggNOG" id="COG0389">
    <property type="taxonomic scope" value="Bacteria"/>
</dbReference>
<dbReference type="Proteomes" id="UP000000419">
    <property type="component" value="Chromosome II"/>
</dbReference>
<dbReference type="GO" id="GO:0005829">
    <property type="term" value="C:cytosol"/>
    <property type="evidence" value="ECO:0007669"/>
    <property type="project" value="TreeGrafter"/>
</dbReference>
<dbReference type="GO" id="GO:0003684">
    <property type="term" value="F:damaged DNA binding"/>
    <property type="evidence" value="ECO:0007669"/>
    <property type="project" value="InterPro"/>
</dbReference>
<dbReference type="GO" id="GO:0003887">
    <property type="term" value="F:DNA-directed DNA polymerase activity"/>
    <property type="evidence" value="ECO:0007669"/>
    <property type="project" value="UniProtKB-UniRule"/>
</dbReference>
<dbReference type="GO" id="GO:0000287">
    <property type="term" value="F:magnesium ion binding"/>
    <property type="evidence" value="ECO:0007669"/>
    <property type="project" value="UniProtKB-UniRule"/>
</dbReference>
<dbReference type="GO" id="GO:0006261">
    <property type="term" value="P:DNA-templated DNA replication"/>
    <property type="evidence" value="ECO:0007669"/>
    <property type="project" value="UniProtKB-UniRule"/>
</dbReference>
<dbReference type="GO" id="GO:0042276">
    <property type="term" value="P:error-prone translesion synthesis"/>
    <property type="evidence" value="ECO:0007669"/>
    <property type="project" value="TreeGrafter"/>
</dbReference>
<dbReference type="GO" id="GO:0009432">
    <property type="term" value="P:SOS response"/>
    <property type="evidence" value="ECO:0007669"/>
    <property type="project" value="TreeGrafter"/>
</dbReference>
<dbReference type="CDD" id="cd03586">
    <property type="entry name" value="PolY_Pol_IV_kappa"/>
    <property type="match status" value="1"/>
</dbReference>
<dbReference type="FunFam" id="3.30.1490.100:FF:000004">
    <property type="entry name" value="DNA polymerase IV"/>
    <property type="match status" value="1"/>
</dbReference>
<dbReference type="FunFam" id="3.40.1170.60:FF:000001">
    <property type="entry name" value="DNA polymerase IV"/>
    <property type="match status" value="1"/>
</dbReference>
<dbReference type="Gene3D" id="3.30.70.270">
    <property type="match status" value="1"/>
</dbReference>
<dbReference type="Gene3D" id="3.40.1170.60">
    <property type="match status" value="1"/>
</dbReference>
<dbReference type="Gene3D" id="1.10.150.20">
    <property type="entry name" value="5' to 3' exonuclease, C-terminal subdomain"/>
    <property type="match status" value="1"/>
</dbReference>
<dbReference type="Gene3D" id="3.30.1490.100">
    <property type="entry name" value="DNA polymerase, Y-family, little finger domain"/>
    <property type="match status" value="1"/>
</dbReference>
<dbReference type="HAMAP" id="MF_01113">
    <property type="entry name" value="DNApol_IV"/>
    <property type="match status" value="1"/>
</dbReference>
<dbReference type="InterPro" id="IPR043502">
    <property type="entry name" value="DNA/RNA_pol_sf"/>
</dbReference>
<dbReference type="InterPro" id="IPR036775">
    <property type="entry name" value="DNA_pol_Y-fam_lit_finger_sf"/>
</dbReference>
<dbReference type="InterPro" id="IPR017961">
    <property type="entry name" value="DNA_pol_Y-fam_little_finger"/>
</dbReference>
<dbReference type="InterPro" id="IPR050116">
    <property type="entry name" value="DNA_polymerase-Y"/>
</dbReference>
<dbReference type="InterPro" id="IPR022880">
    <property type="entry name" value="DNApol_IV"/>
</dbReference>
<dbReference type="InterPro" id="IPR053848">
    <property type="entry name" value="IMS_HHH_1"/>
</dbReference>
<dbReference type="InterPro" id="IPR043128">
    <property type="entry name" value="Rev_trsase/Diguanyl_cyclase"/>
</dbReference>
<dbReference type="InterPro" id="IPR001126">
    <property type="entry name" value="UmuC"/>
</dbReference>
<dbReference type="NCBIfam" id="NF002677">
    <property type="entry name" value="PRK02406.1"/>
    <property type="match status" value="1"/>
</dbReference>
<dbReference type="NCBIfam" id="NF002751">
    <property type="entry name" value="PRK02794.1"/>
    <property type="match status" value="1"/>
</dbReference>
<dbReference type="PANTHER" id="PTHR11076:SF33">
    <property type="entry name" value="DNA POLYMERASE KAPPA"/>
    <property type="match status" value="1"/>
</dbReference>
<dbReference type="PANTHER" id="PTHR11076">
    <property type="entry name" value="DNA REPAIR POLYMERASE UMUC / TRANSFERASE FAMILY MEMBER"/>
    <property type="match status" value="1"/>
</dbReference>
<dbReference type="Pfam" id="PF00817">
    <property type="entry name" value="IMS"/>
    <property type="match status" value="1"/>
</dbReference>
<dbReference type="Pfam" id="PF11799">
    <property type="entry name" value="IMS_C"/>
    <property type="match status" value="1"/>
</dbReference>
<dbReference type="Pfam" id="PF21999">
    <property type="entry name" value="IMS_HHH_1"/>
    <property type="match status" value="1"/>
</dbReference>
<dbReference type="SUPFAM" id="SSF56672">
    <property type="entry name" value="DNA/RNA polymerases"/>
    <property type="match status" value="1"/>
</dbReference>
<dbReference type="SUPFAM" id="SSF100879">
    <property type="entry name" value="Lesion bypass DNA polymerase (Y-family), little finger domain"/>
    <property type="match status" value="1"/>
</dbReference>
<dbReference type="PROSITE" id="PS50173">
    <property type="entry name" value="UMUC"/>
    <property type="match status" value="1"/>
</dbReference>
<sequence>MAESPIVNHPEQGLCRDCLSLQKTQTSRRCHACGSPRLIRHKELYRLSLAHVDCDAFYASVEKRDNPDLRDKPLIVGGGKRGVVSTACYLARIHGVRSAMPMFKALEACPDAVVIKPNMEKYARVGREVRQMMRDLTPLVEPISIDEAFLDLSGTERLHKAPPAVVLARFSKRVENEIGITASIGLSYCKYLAKVASDLEKPRGFSVIGEAEALDFLRDKPVGMIWGVGKAFAAKLESDGIRTIGQLQTMEEGALMKAYGTMGQRLYRLSRGQDSRKVEPDHDMKSVSAETTFNTDLSAAGDLVPVLRALSEKVSRRLKAGEIAGRTIVLKLKTQDFKLRTRNRQLGDPTQLADRIFRTGLQLLEKEMDGTRFRLLGIGVSDLSPSDRADPPDLVDIQATKRAVAESAIDRLRNKFGLNAVETGYTFSKGNLARTQTPTDRDNEP</sequence>
<organism>
    <name type="scientific">Brucella melitensis biotype 1 (strain ATCC 23456 / CCUG 17765 / NCTC 10094 / 16M)</name>
    <dbReference type="NCBI Taxonomy" id="224914"/>
    <lineage>
        <taxon>Bacteria</taxon>
        <taxon>Pseudomonadati</taxon>
        <taxon>Pseudomonadota</taxon>
        <taxon>Alphaproteobacteria</taxon>
        <taxon>Hyphomicrobiales</taxon>
        <taxon>Brucellaceae</taxon>
        <taxon>Brucella/Ochrobactrum group</taxon>
        <taxon>Brucella</taxon>
    </lineage>
</organism>
<proteinExistence type="inferred from homology"/>
<name>DPO4_BRUME</name>
<keyword id="KW-0963">Cytoplasm</keyword>
<keyword id="KW-0227">DNA damage</keyword>
<keyword id="KW-0234">DNA repair</keyword>
<keyword id="KW-0235">DNA replication</keyword>
<keyword id="KW-0238">DNA-binding</keyword>
<keyword id="KW-0239">DNA-directed DNA polymerase</keyword>
<keyword id="KW-0460">Magnesium</keyword>
<keyword id="KW-0479">Metal-binding</keyword>
<keyword id="KW-0515">Mutator protein</keyword>
<keyword id="KW-0548">Nucleotidyltransferase</keyword>
<keyword id="KW-0808">Transferase</keyword>
<reference key="1">
    <citation type="journal article" date="2002" name="Proc. Natl. Acad. Sci. U.S.A.">
        <title>The genome sequence of the facultative intracellular pathogen Brucella melitensis.</title>
        <authorList>
            <person name="DelVecchio V.G."/>
            <person name="Kapatral V."/>
            <person name="Redkar R.J."/>
            <person name="Patra G."/>
            <person name="Mujer C."/>
            <person name="Los T."/>
            <person name="Ivanova N."/>
            <person name="Anderson I."/>
            <person name="Bhattacharyya A."/>
            <person name="Lykidis A."/>
            <person name="Reznik G."/>
            <person name="Jablonski L."/>
            <person name="Larsen N."/>
            <person name="D'Souza M."/>
            <person name="Bernal A."/>
            <person name="Mazur M."/>
            <person name="Goltsman E."/>
            <person name="Selkov E."/>
            <person name="Elzer P.H."/>
            <person name="Hagius S."/>
            <person name="O'Callaghan D."/>
            <person name="Letesson J.-J."/>
            <person name="Haselkorn R."/>
            <person name="Kyrpides N.C."/>
            <person name="Overbeek R."/>
        </authorList>
    </citation>
    <scope>NUCLEOTIDE SEQUENCE [LARGE SCALE GENOMIC DNA]</scope>
    <source>
        <strain>ATCC 23456 / CCUG 17765 / NCTC 10094 / 16M</strain>
    </source>
</reference>
<gene>
    <name evidence="1" type="primary">dinB</name>
    <name type="ordered locus">BMEII0656</name>
</gene>
<feature type="chain" id="PRO_0000173906" description="DNA polymerase IV">
    <location>
        <begin position="1"/>
        <end position="445"/>
    </location>
</feature>
<feature type="domain" description="UmuC" evidence="1">
    <location>
        <begin position="49"/>
        <end position="229"/>
    </location>
</feature>
<feature type="active site" evidence="1">
    <location>
        <position position="147"/>
    </location>
</feature>
<feature type="binding site" evidence="1">
    <location>
        <position position="53"/>
    </location>
    <ligand>
        <name>Mg(2+)</name>
        <dbReference type="ChEBI" id="CHEBI:18420"/>
    </ligand>
</feature>
<feature type="binding site" evidence="1">
    <location>
        <position position="146"/>
    </location>
    <ligand>
        <name>Mg(2+)</name>
        <dbReference type="ChEBI" id="CHEBI:18420"/>
    </ligand>
</feature>
<feature type="site" description="Substrate discrimination" evidence="1">
    <location>
        <position position="58"/>
    </location>
</feature>
<accession>Q8YC76</accession>
<protein>
    <recommendedName>
        <fullName evidence="1">DNA polymerase IV</fullName>
        <shortName evidence="1">Pol IV</shortName>
        <ecNumber evidence="1">2.7.7.7</ecNumber>
    </recommendedName>
</protein>
<evidence type="ECO:0000255" key="1">
    <source>
        <dbReference type="HAMAP-Rule" id="MF_01113"/>
    </source>
</evidence>
<comment type="function">
    <text evidence="1">Poorly processive, error-prone DNA polymerase involved in untargeted mutagenesis. Copies undamaged DNA at stalled replication forks, which arise in vivo from mismatched or misaligned primer ends. These misaligned primers can be extended by PolIV. Exhibits no 3'-5' exonuclease (proofreading) activity. May be involved in translesional synthesis, in conjunction with the beta clamp from PolIII.</text>
</comment>
<comment type="catalytic activity">
    <reaction evidence="1">
        <text>DNA(n) + a 2'-deoxyribonucleoside 5'-triphosphate = DNA(n+1) + diphosphate</text>
        <dbReference type="Rhea" id="RHEA:22508"/>
        <dbReference type="Rhea" id="RHEA-COMP:17339"/>
        <dbReference type="Rhea" id="RHEA-COMP:17340"/>
        <dbReference type="ChEBI" id="CHEBI:33019"/>
        <dbReference type="ChEBI" id="CHEBI:61560"/>
        <dbReference type="ChEBI" id="CHEBI:173112"/>
        <dbReference type="EC" id="2.7.7.7"/>
    </reaction>
</comment>
<comment type="cofactor">
    <cofactor evidence="1">
        <name>Mg(2+)</name>
        <dbReference type="ChEBI" id="CHEBI:18420"/>
    </cofactor>
    <text evidence="1">Binds 2 magnesium ions per subunit.</text>
</comment>
<comment type="subunit">
    <text evidence="1">Monomer.</text>
</comment>
<comment type="subcellular location">
    <subcellularLocation>
        <location evidence="1">Cytoplasm</location>
    </subcellularLocation>
</comment>
<comment type="similarity">
    <text evidence="1">Belongs to the DNA polymerase type-Y family.</text>
</comment>